<dbReference type="EC" id="2.8.4.3" evidence="1"/>
<dbReference type="EMBL" id="CP001139">
    <property type="protein sequence ID" value="ACH66054.1"/>
    <property type="molecule type" value="Genomic_DNA"/>
</dbReference>
<dbReference type="RefSeq" id="WP_005418189.1">
    <property type="nucleotide sequence ID" value="NC_011184.1"/>
</dbReference>
<dbReference type="SMR" id="B5FBL3"/>
<dbReference type="GeneID" id="54163413"/>
<dbReference type="KEGG" id="vfm:VFMJ11_0778"/>
<dbReference type="HOGENOM" id="CLU_018697_2_0_6"/>
<dbReference type="Proteomes" id="UP000001857">
    <property type="component" value="Chromosome I"/>
</dbReference>
<dbReference type="GO" id="GO:0005829">
    <property type="term" value="C:cytosol"/>
    <property type="evidence" value="ECO:0007669"/>
    <property type="project" value="TreeGrafter"/>
</dbReference>
<dbReference type="GO" id="GO:0051539">
    <property type="term" value="F:4 iron, 4 sulfur cluster binding"/>
    <property type="evidence" value="ECO:0007669"/>
    <property type="project" value="UniProtKB-UniRule"/>
</dbReference>
<dbReference type="GO" id="GO:0046872">
    <property type="term" value="F:metal ion binding"/>
    <property type="evidence" value="ECO:0007669"/>
    <property type="project" value="UniProtKB-KW"/>
</dbReference>
<dbReference type="GO" id="GO:0035597">
    <property type="term" value="F:N6-isopentenyladenosine methylthiotransferase activity"/>
    <property type="evidence" value="ECO:0007669"/>
    <property type="project" value="TreeGrafter"/>
</dbReference>
<dbReference type="CDD" id="cd01335">
    <property type="entry name" value="Radical_SAM"/>
    <property type="match status" value="1"/>
</dbReference>
<dbReference type="FunFam" id="3.40.50.12160:FF:000001">
    <property type="entry name" value="tRNA-2-methylthio-N(6)-dimethylallyladenosine synthase"/>
    <property type="match status" value="1"/>
</dbReference>
<dbReference type="FunFam" id="3.80.30.20:FF:000001">
    <property type="entry name" value="tRNA-2-methylthio-N(6)-dimethylallyladenosine synthase 2"/>
    <property type="match status" value="1"/>
</dbReference>
<dbReference type="Gene3D" id="3.40.50.12160">
    <property type="entry name" value="Methylthiotransferase, N-terminal domain"/>
    <property type="match status" value="1"/>
</dbReference>
<dbReference type="Gene3D" id="3.80.30.20">
    <property type="entry name" value="tm_1862 like domain"/>
    <property type="match status" value="1"/>
</dbReference>
<dbReference type="HAMAP" id="MF_01864">
    <property type="entry name" value="tRNA_metthiotr_MiaB"/>
    <property type="match status" value="1"/>
</dbReference>
<dbReference type="InterPro" id="IPR006638">
    <property type="entry name" value="Elp3/MiaA/NifB-like_rSAM"/>
</dbReference>
<dbReference type="InterPro" id="IPR005839">
    <property type="entry name" value="Methylthiotransferase"/>
</dbReference>
<dbReference type="InterPro" id="IPR020612">
    <property type="entry name" value="Methylthiotransferase_CS"/>
</dbReference>
<dbReference type="InterPro" id="IPR013848">
    <property type="entry name" value="Methylthiotransferase_N"/>
</dbReference>
<dbReference type="InterPro" id="IPR038135">
    <property type="entry name" value="Methylthiotransferase_N_sf"/>
</dbReference>
<dbReference type="InterPro" id="IPR006463">
    <property type="entry name" value="MiaB_methiolase"/>
</dbReference>
<dbReference type="InterPro" id="IPR007197">
    <property type="entry name" value="rSAM"/>
</dbReference>
<dbReference type="InterPro" id="IPR023404">
    <property type="entry name" value="rSAM_horseshoe"/>
</dbReference>
<dbReference type="InterPro" id="IPR002792">
    <property type="entry name" value="TRAM_dom"/>
</dbReference>
<dbReference type="NCBIfam" id="TIGR01574">
    <property type="entry name" value="miaB-methiolase"/>
    <property type="match status" value="1"/>
</dbReference>
<dbReference type="NCBIfam" id="TIGR00089">
    <property type="entry name" value="MiaB/RimO family radical SAM methylthiotransferase"/>
    <property type="match status" value="1"/>
</dbReference>
<dbReference type="PANTHER" id="PTHR43020">
    <property type="entry name" value="CDK5 REGULATORY SUBUNIT-ASSOCIATED PROTEIN 1"/>
    <property type="match status" value="1"/>
</dbReference>
<dbReference type="PANTHER" id="PTHR43020:SF2">
    <property type="entry name" value="MITOCHONDRIAL TRNA METHYLTHIOTRANSFERASE CDK5RAP1"/>
    <property type="match status" value="1"/>
</dbReference>
<dbReference type="Pfam" id="PF04055">
    <property type="entry name" value="Radical_SAM"/>
    <property type="match status" value="1"/>
</dbReference>
<dbReference type="Pfam" id="PF01938">
    <property type="entry name" value="TRAM"/>
    <property type="match status" value="1"/>
</dbReference>
<dbReference type="Pfam" id="PF00919">
    <property type="entry name" value="UPF0004"/>
    <property type="match status" value="1"/>
</dbReference>
<dbReference type="SFLD" id="SFLDF00273">
    <property type="entry name" value="(dimethylallyl)adenosine_tRNA"/>
    <property type="match status" value="1"/>
</dbReference>
<dbReference type="SFLD" id="SFLDG01082">
    <property type="entry name" value="B12-binding_domain_containing"/>
    <property type="match status" value="1"/>
</dbReference>
<dbReference type="SFLD" id="SFLDG01061">
    <property type="entry name" value="methylthiotransferase"/>
    <property type="match status" value="1"/>
</dbReference>
<dbReference type="SMART" id="SM00729">
    <property type="entry name" value="Elp3"/>
    <property type="match status" value="1"/>
</dbReference>
<dbReference type="SUPFAM" id="SSF102114">
    <property type="entry name" value="Radical SAM enzymes"/>
    <property type="match status" value="1"/>
</dbReference>
<dbReference type="PROSITE" id="PS51449">
    <property type="entry name" value="MTTASE_N"/>
    <property type="match status" value="1"/>
</dbReference>
<dbReference type="PROSITE" id="PS01278">
    <property type="entry name" value="MTTASE_RADICAL"/>
    <property type="match status" value="1"/>
</dbReference>
<dbReference type="PROSITE" id="PS51918">
    <property type="entry name" value="RADICAL_SAM"/>
    <property type="match status" value="1"/>
</dbReference>
<dbReference type="PROSITE" id="PS50926">
    <property type="entry name" value="TRAM"/>
    <property type="match status" value="1"/>
</dbReference>
<organism>
    <name type="scientific">Aliivibrio fischeri (strain MJ11)</name>
    <name type="common">Vibrio fischeri</name>
    <dbReference type="NCBI Taxonomy" id="388396"/>
    <lineage>
        <taxon>Bacteria</taxon>
        <taxon>Pseudomonadati</taxon>
        <taxon>Pseudomonadota</taxon>
        <taxon>Gammaproteobacteria</taxon>
        <taxon>Vibrionales</taxon>
        <taxon>Vibrionaceae</taxon>
        <taxon>Aliivibrio</taxon>
    </lineage>
</organism>
<name>MIAB_ALIFM</name>
<accession>B5FBL3</accession>
<comment type="function">
    <text evidence="1">Catalyzes the methylthiolation of N6-(dimethylallyl)adenosine (i(6)A), leading to the formation of 2-methylthio-N6-(dimethylallyl)adenosine (ms(2)i(6)A) at position 37 in tRNAs that read codons beginning with uridine.</text>
</comment>
<comment type="catalytic activity">
    <reaction evidence="1">
        <text>N(6)-dimethylallyladenosine(37) in tRNA + (sulfur carrier)-SH + AH2 + 2 S-adenosyl-L-methionine = 2-methylsulfanyl-N(6)-dimethylallyladenosine(37) in tRNA + (sulfur carrier)-H + 5'-deoxyadenosine + L-methionine + A + S-adenosyl-L-homocysteine + 2 H(+)</text>
        <dbReference type="Rhea" id="RHEA:37067"/>
        <dbReference type="Rhea" id="RHEA-COMP:10375"/>
        <dbReference type="Rhea" id="RHEA-COMP:10376"/>
        <dbReference type="Rhea" id="RHEA-COMP:14737"/>
        <dbReference type="Rhea" id="RHEA-COMP:14739"/>
        <dbReference type="ChEBI" id="CHEBI:13193"/>
        <dbReference type="ChEBI" id="CHEBI:15378"/>
        <dbReference type="ChEBI" id="CHEBI:17319"/>
        <dbReference type="ChEBI" id="CHEBI:17499"/>
        <dbReference type="ChEBI" id="CHEBI:29917"/>
        <dbReference type="ChEBI" id="CHEBI:57844"/>
        <dbReference type="ChEBI" id="CHEBI:57856"/>
        <dbReference type="ChEBI" id="CHEBI:59789"/>
        <dbReference type="ChEBI" id="CHEBI:64428"/>
        <dbReference type="ChEBI" id="CHEBI:74415"/>
        <dbReference type="ChEBI" id="CHEBI:74417"/>
        <dbReference type="EC" id="2.8.4.3"/>
    </reaction>
</comment>
<comment type="cofactor">
    <cofactor evidence="1">
        <name>[4Fe-4S] cluster</name>
        <dbReference type="ChEBI" id="CHEBI:49883"/>
    </cofactor>
    <text evidence="1">Binds 2 [4Fe-4S] clusters. One cluster is coordinated with 3 cysteines and an exchangeable S-adenosyl-L-methionine.</text>
</comment>
<comment type="subunit">
    <text evidence="1">Monomer.</text>
</comment>
<comment type="subcellular location">
    <subcellularLocation>
        <location evidence="1">Cytoplasm</location>
    </subcellularLocation>
</comment>
<comment type="similarity">
    <text evidence="1">Belongs to the methylthiotransferase family. MiaB subfamily.</text>
</comment>
<keyword id="KW-0004">4Fe-4S</keyword>
<keyword id="KW-0963">Cytoplasm</keyword>
<keyword id="KW-0408">Iron</keyword>
<keyword id="KW-0411">Iron-sulfur</keyword>
<keyword id="KW-0479">Metal-binding</keyword>
<keyword id="KW-0949">S-adenosyl-L-methionine</keyword>
<keyword id="KW-0808">Transferase</keyword>
<keyword id="KW-0819">tRNA processing</keyword>
<proteinExistence type="inferred from homology"/>
<feature type="chain" id="PRO_0000374632" description="tRNA-2-methylthio-N(6)-dimethylallyladenosine synthase">
    <location>
        <begin position="1"/>
        <end position="474"/>
    </location>
</feature>
<feature type="domain" description="MTTase N-terminal" evidence="1">
    <location>
        <begin position="3"/>
        <end position="120"/>
    </location>
</feature>
<feature type="domain" description="Radical SAM core" evidence="2">
    <location>
        <begin position="143"/>
        <end position="375"/>
    </location>
</feature>
<feature type="domain" description="TRAM" evidence="1">
    <location>
        <begin position="378"/>
        <end position="441"/>
    </location>
</feature>
<feature type="binding site" evidence="1">
    <location>
        <position position="12"/>
    </location>
    <ligand>
        <name>[4Fe-4S] cluster</name>
        <dbReference type="ChEBI" id="CHEBI:49883"/>
        <label>1</label>
    </ligand>
</feature>
<feature type="binding site" evidence="1">
    <location>
        <position position="49"/>
    </location>
    <ligand>
        <name>[4Fe-4S] cluster</name>
        <dbReference type="ChEBI" id="CHEBI:49883"/>
        <label>1</label>
    </ligand>
</feature>
<feature type="binding site" evidence="1">
    <location>
        <position position="83"/>
    </location>
    <ligand>
        <name>[4Fe-4S] cluster</name>
        <dbReference type="ChEBI" id="CHEBI:49883"/>
        <label>1</label>
    </ligand>
</feature>
<feature type="binding site" evidence="1">
    <location>
        <position position="157"/>
    </location>
    <ligand>
        <name>[4Fe-4S] cluster</name>
        <dbReference type="ChEBI" id="CHEBI:49883"/>
        <label>2</label>
        <note>4Fe-4S-S-AdoMet</note>
    </ligand>
</feature>
<feature type="binding site" evidence="1">
    <location>
        <position position="161"/>
    </location>
    <ligand>
        <name>[4Fe-4S] cluster</name>
        <dbReference type="ChEBI" id="CHEBI:49883"/>
        <label>2</label>
        <note>4Fe-4S-S-AdoMet</note>
    </ligand>
</feature>
<feature type="binding site" evidence="1">
    <location>
        <position position="164"/>
    </location>
    <ligand>
        <name>[4Fe-4S] cluster</name>
        <dbReference type="ChEBI" id="CHEBI:49883"/>
        <label>2</label>
        <note>4Fe-4S-S-AdoMet</note>
    </ligand>
</feature>
<protein>
    <recommendedName>
        <fullName evidence="1">tRNA-2-methylthio-N(6)-dimethylallyladenosine synthase</fullName>
        <ecNumber evidence="1">2.8.4.3</ecNumber>
    </recommendedName>
    <alternativeName>
        <fullName evidence="1">(Dimethylallyl)adenosine tRNA methylthiotransferase MiaB</fullName>
    </alternativeName>
    <alternativeName>
        <fullName evidence="1">tRNA-i(6)A37 methylthiotransferase</fullName>
    </alternativeName>
</protein>
<reference key="1">
    <citation type="submission" date="2008-08" db="EMBL/GenBank/DDBJ databases">
        <title>Complete sequence of Vibrio fischeri strain MJ11.</title>
        <authorList>
            <person name="Mandel M.J."/>
            <person name="Stabb E.V."/>
            <person name="Ruby E.G."/>
            <person name="Ferriera S."/>
            <person name="Johnson J."/>
            <person name="Kravitz S."/>
            <person name="Beeson K."/>
            <person name="Sutton G."/>
            <person name="Rogers Y.-H."/>
            <person name="Friedman R."/>
            <person name="Frazier M."/>
            <person name="Venter J.C."/>
        </authorList>
    </citation>
    <scope>NUCLEOTIDE SEQUENCE [LARGE SCALE GENOMIC DNA]</scope>
    <source>
        <strain>MJ11</strain>
    </source>
</reference>
<sequence>MTKKLLIKTWGCQMNEYDSSKMADLLGAANGYELTEEPTEADVLLLNTCSIREKAQEKVFHQLGRWKNLKDKKPDLVIGVGGCVATQEGDHIRQRAPYVDVIFGPQTLHRLPEMIRQSQSNEKPVMDISFPEIEKFDNLPEPKAEGATAFVSIMEGCSKYCTYCVVPYTRGEEVSRPLDDVLFEIAQLAEQGVREVNLLGQNVNAYRGPMHDGDICTFAELLRMVASIDGIDRLRFTTSHPLEFGDDIIAVYEDTPELVSFLHLPVQSGSDRILTMMKRPHTAIEYKSIIRKLRKARPDIQISSDFIVGFPGETAKDFQDTMKLIKDVDFDMSFSFIFSARPGTPAADYPCDIPEQEKKDRLAELQQQVNSQAMRYSRLMLDTEQRVLVEGPSKKNLMELRARTENNRVVNFEGSADLIGQFVDVKITDVFANSLRGELVRTEKDMGLRVVMTPAEMMEKTRREDDLGVGTFTP</sequence>
<gene>
    <name evidence="1" type="primary">miaB</name>
    <name type="ordered locus">VFMJ11_0778</name>
</gene>
<evidence type="ECO:0000255" key="1">
    <source>
        <dbReference type="HAMAP-Rule" id="MF_01864"/>
    </source>
</evidence>
<evidence type="ECO:0000255" key="2">
    <source>
        <dbReference type="PROSITE-ProRule" id="PRU01266"/>
    </source>
</evidence>